<organism>
    <name type="scientific">Bacillus velezensis (strain DSM 23117 / BGSC 10A6 / LMG 26770 / FZB42)</name>
    <name type="common">Bacillus amyloliquefaciens subsp. plantarum</name>
    <dbReference type="NCBI Taxonomy" id="326423"/>
    <lineage>
        <taxon>Bacteria</taxon>
        <taxon>Bacillati</taxon>
        <taxon>Bacillota</taxon>
        <taxon>Bacilli</taxon>
        <taxon>Bacillales</taxon>
        <taxon>Bacillaceae</taxon>
        <taxon>Bacillus</taxon>
        <taxon>Bacillus amyloliquefaciens group</taxon>
    </lineage>
</organism>
<evidence type="ECO:0000250" key="1"/>
<evidence type="ECO:0000255" key="2"/>
<evidence type="ECO:0000305" key="3"/>
<feature type="chain" id="PRO_0000337068" description="Cadmium, cobalt and zinc/H(+)-K(+) antiporter">
    <location>
        <begin position="1"/>
        <end position="313"/>
    </location>
</feature>
<feature type="topological domain" description="Extracellular" evidence="2">
    <location>
        <begin position="1"/>
        <end position="14"/>
    </location>
</feature>
<feature type="transmembrane region" description="Helical" evidence="2">
    <location>
        <begin position="15"/>
        <end position="35"/>
    </location>
</feature>
<feature type="topological domain" description="Cytoplasmic" evidence="2">
    <location>
        <begin position="36"/>
        <end position="45"/>
    </location>
</feature>
<feature type="transmembrane region" description="Helical" evidence="2">
    <location>
        <begin position="46"/>
        <end position="66"/>
    </location>
</feature>
<feature type="topological domain" description="Extracellular" evidence="2">
    <location>
        <begin position="67"/>
        <end position="80"/>
    </location>
</feature>
<feature type="transmembrane region" description="Helical" evidence="2">
    <location>
        <begin position="81"/>
        <end position="101"/>
    </location>
</feature>
<feature type="topological domain" description="Cytoplasmic" evidence="2">
    <location>
        <begin position="102"/>
        <end position="117"/>
    </location>
</feature>
<feature type="transmembrane region" description="Helical" evidence="2">
    <location>
        <begin position="118"/>
        <end position="138"/>
    </location>
</feature>
<feature type="topological domain" description="Extracellular" evidence="2">
    <location>
        <begin position="139"/>
        <end position="159"/>
    </location>
</feature>
<feature type="transmembrane region" description="Helical" evidence="2">
    <location>
        <begin position="160"/>
        <end position="180"/>
    </location>
</feature>
<feature type="topological domain" description="Cytoplasmic" evidence="2">
    <location>
        <begin position="181"/>
        <end position="313"/>
    </location>
</feature>
<comment type="function">
    <text evidence="1">Involved in divalent cation and potassium homeostasis in the cell. Catalyzes the active efflux of zinc, cadmium and cobalt, in exchange for potassium and H(+) ions (By similarity).</text>
</comment>
<comment type="subcellular location">
    <subcellularLocation>
        <location evidence="1">Cell membrane</location>
        <topology evidence="1">Multi-pass membrane protein</topology>
    </subcellularLocation>
</comment>
<comment type="similarity">
    <text evidence="3">Belongs to the cation diffusion facilitator (CDF) transporter (TC 2.A.4) family. SLC30A subfamily.</text>
</comment>
<reference key="1">
    <citation type="journal article" date="2007" name="Nat. Biotechnol.">
        <title>Comparative analysis of the complete genome sequence of the plant growth-promoting bacterium Bacillus amyloliquefaciens FZB42.</title>
        <authorList>
            <person name="Chen X.H."/>
            <person name="Koumoutsi A."/>
            <person name="Scholz R."/>
            <person name="Eisenreich A."/>
            <person name="Schneider K."/>
            <person name="Heinemeyer I."/>
            <person name="Morgenstern B."/>
            <person name="Voss B."/>
            <person name="Hess W.R."/>
            <person name="Reva O."/>
            <person name="Junge H."/>
            <person name="Voigt B."/>
            <person name="Jungblut P.R."/>
            <person name="Vater J."/>
            <person name="Suessmuth R."/>
            <person name="Liesegang H."/>
            <person name="Strittmatter A."/>
            <person name="Gottschalk G."/>
            <person name="Borriss R."/>
        </authorList>
    </citation>
    <scope>NUCLEOTIDE SEQUENCE [LARGE SCALE GENOMIC DNA]</scope>
    <source>
        <strain>DSM 23117 / BGSC 10A6 / LMG 26770 / FZB42</strain>
    </source>
</reference>
<accession>A7Z1S6</accession>
<sequence length="313" mass="34099">MGHNHNHAGGSNKKVLLISFIMITGYMIIEAIGGFLTNSLALLSDAGHMLSDSISLMVALIAFKLAEKKASHHKTFGYKRFEILAAVINGVALILISLYIIYEAIKRFSHPPEVATTGMLTISIIGLAVNILVAWIMLNGGDTKNNLNIRGAYLHVISDMLGSIGAILAAILIIFFGWSWADPAASVIVAILVLRSGYHVTKDSIHVLMEGTPGNIDVTDIIHTIEETEGIQSIHDLHIWSITSGLNALSCHAVVNDQLTISESESILRKIEHELGDKGITHVTIQMETAAHNHDNTILCQSQTENPRDHHHH</sequence>
<proteinExistence type="inferred from homology"/>
<name>CZCD_BACVZ</name>
<gene>
    <name type="primary">czcD</name>
    <name type="ordered locus">RBAM_005600</name>
</gene>
<dbReference type="EMBL" id="CP000560">
    <property type="protein sequence ID" value="ABS72952.1"/>
    <property type="molecule type" value="Genomic_DNA"/>
</dbReference>
<dbReference type="RefSeq" id="WP_012116909.1">
    <property type="nucleotide sequence ID" value="NC_009725.2"/>
</dbReference>
<dbReference type="SMR" id="A7Z1S6"/>
<dbReference type="GeneID" id="93079693"/>
<dbReference type="KEGG" id="bay:RBAM_005600"/>
<dbReference type="HOGENOM" id="CLU_013430_0_0_9"/>
<dbReference type="Proteomes" id="UP000001120">
    <property type="component" value="Chromosome"/>
</dbReference>
<dbReference type="GO" id="GO:0005886">
    <property type="term" value="C:plasma membrane"/>
    <property type="evidence" value="ECO:0007669"/>
    <property type="project" value="UniProtKB-SubCell"/>
</dbReference>
<dbReference type="GO" id="GO:0005385">
    <property type="term" value="F:zinc ion transmembrane transporter activity"/>
    <property type="evidence" value="ECO:0007669"/>
    <property type="project" value="TreeGrafter"/>
</dbReference>
<dbReference type="GO" id="GO:0006824">
    <property type="term" value="P:cobalt ion transport"/>
    <property type="evidence" value="ECO:0007669"/>
    <property type="project" value="UniProtKB-KW"/>
</dbReference>
<dbReference type="GO" id="GO:0006813">
    <property type="term" value="P:potassium ion transport"/>
    <property type="evidence" value="ECO:0007669"/>
    <property type="project" value="UniProtKB-KW"/>
</dbReference>
<dbReference type="Gene3D" id="1.20.1510.10">
    <property type="entry name" value="Cation efflux protein transmembrane domain"/>
    <property type="match status" value="1"/>
</dbReference>
<dbReference type="Gene3D" id="3.30.70.1350">
    <property type="entry name" value="Cation efflux protein, cytoplasmic domain"/>
    <property type="match status" value="1"/>
</dbReference>
<dbReference type="InterPro" id="IPR002524">
    <property type="entry name" value="Cation_efflux"/>
</dbReference>
<dbReference type="InterPro" id="IPR027470">
    <property type="entry name" value="Cation_efflux_CTD"/>
</dbReference>
<dbReference type="InterPro" id="IPR036837">
    <property type="entry name" value="Cation_efflux_CTD_sf"/>
</dbReference>
<dbReference type="InterPro" id="IPR027469">
    <property type="entry name" value="Cation_efflux_TMD_sf"/>
</dbReference>
<dbReference type="InterPro" id="IPR050681">
    <property type="entry name" value="CDF/SLC30A"/>
</dbReference>
<dbReference type="NCBIfam" id="TIGR01297">
    <property type="entry name" value="CDF"/>
    <property type="match status" value="1"/>
</dbReference>
<dbReference type="PANTHER" id="PTHR11562">
    <property type="entry name" value="CATION EFFLUX PROTEIN/ ZINC TRANSPORTER"/>
    <property type="match status" value="1"/>
</dbReference>
<dbReference type="PANTHER" id="PTHR11562:SF17">
    <property type="entry name" value="RE54080P-RELATED"/>
    <property type="match status" value="1"/>
</dbReference>
<dbReference type="Pfam" id="PF01545">
    <property type="entry name" value="Cation_efflux"/>
    <property type="match status" value="1"/>
</dbReference>
<dbReference type="Pfam" id="PF16916">
    <property type="entry name" value="ZT_dimer"/>
    <property type="match status" value="1"/>
</dbReference>
<dbReference type="SUPFAM" id="SSF160240">
    <property type="entry name" value="Cation efflux protein cytoplasmic domain-like"/>
    <property type="match status" value="1"/>
</dbReference>
<dbReference type="SUPFAM" id="SSF161111">
    <property type="entry name" value="Cation efflux protein transmembrane domain-like"/>
    <property type="match status" value="1"/>
</dbReference>
<protein>
    <recommendedName>
        <fullName>Cadmium, cobalt and zinc/H(+)-K(+) antiporter</fullName>
    </recommendedName>
</protein>
<keyword id="KW-0104">Cadmium</keyword>
<keyword id="KW-1003">Cell membrane</keyword>
<keyword id="KW-0170">Cobalt</keyword>
<keyword id="KW-0171">Cobalt transport</keyword>
<keyword id="KW-0406">Ion transport</keyword>
<keyword id="KW-0472">Membrane</keyword>
<keyword id="KW-0630">Potassium</keyword>
<keyword id="KW-0633">Potassium transport</keyword>
<keyword id="KW-0812">Transmembrane</keyword>
<keyword id="KW-1133">Transmembrane helix</keyword>
<keyword id="KW-0813">Transport</keyword>
<keyword id="KW-0862">Zinc</keyword>
<keyword id="KW-0864">Zinc transport</keyword>